<organism>
    <name type="scientific">Burkholderia pseudomallei (strain K96243)</name>
    <dbReference type="NCBI Taxonomy" id="272560"/>
    <lineage>
        <taxon>Bacteria</taxon>
        <taxon>Pseudomonadati</taxon>
        <taxon>Pseudomonadota</taxon>
        <taxon>Betaproteobacteria</taxon>
        <taxon>Burkholderiales</taxon>
        <taxon>Burkholderiaceae</taxon>
        <taxon>Burkholderia</taxon>
        <taxon>pseudomallei group</taxon>
    </lineage>
</organism>
<keyword id="KW-0145">Chemotaxis</keyword>
<keyword id="KW-0378">Hydrolase</keyword>
<keyword id="KW-1185">Reference proteome</keyword>
<protein>
    <recommendedName>
        <fullName evidence="1">Probable chemoreceptor glutamine deamidase CheD</fullName>
        <ecNumber evidence="1">3.5.1.44</ecNumber>
    </recommendedName>
</protein>
<dbReference type="EC" id="3.5.1.44" evidence="1"/>
<dbReference type="EMBL" id="BX571965">
    <property type="protein sequence ID" value="CAH37315.1"/>
    <property type="molecule type" value="Genomic_DNA"/>
</dbReference>
<dbReference type="RefSeq" id="WP_004524404.1">
    <property type="nucleotide sequence ID" value="NZ_CP009538.1"/>
</dbReference>
<dbReference type="RefSeq" id="YP_109898.1">
    <property type="nucleotide sequence ID" value="NC_006350.1"/>
</dbReference>
<dbReference type="SMR" id="Q63PS1"/>
<dbReference type="STRING" id="272560.BPSL3302"/>
<dbReference type="GeneID" id="93061923"/>
<dbReference type="KEGG" id="bps:BPSL3302"/>
<dbReference type="PATRIC" id="fig|272560.51.peg.1914"/>
<dbReference type="eggNOG" id="COG1871">
    <property type="taxonomic scope" value="Bacteria"/>
</dbReference>
<dbReference type="Proteomes" id="UP000000605">
    <property type="component" value="Chromosome 1"/>
</dbReference>
<dbReference type="GO" id="GO:0050568">
    <property type="term" value="F:protein-glutamine glutaminase activity"/>
    <property type="evidence" value="ECO:0007669"/>
    <property type="project" value="UniProtKB-UniRule"/>
</dbReference>
<dbReference type="GO" id="GO:0006935">
    <property type="term" value="P:chemotaxis"/>
    <property type="evidence" value="ECO:0007669"/>
    <property type="project" value="UniProtKB-UniRule"/>
</dbReference>
<dbReference type="CDD" id="cd16352">
    <property type="entry name" value="CheD"/>
    <property type="match status" value="1"/>
</dbReference>
<dbReference type="Gene3D" id="3.30.1330.200">
    <property type="match status" value="1"/>
</dbReference>
<dbReference type="HAMAP" id="MF_01440">
    <property type="entry name" value="CheD"/>
    <property type="match status" value="1"/>
</dbReference>
<dbReference type="InterPro" id="IPR038592">
    <property type="entry name" value="CheD-like_sf"/>
</dbReference>
<dbReference type="InterPro" id="IPR005659">
    <property type="entry name" value="Chemorcpt_Glu_NH3ase_CheD"/>
</dbReference>
<dbReference type="InterPro" id="IPR011324">
    <property type="entry name" value="Cytotoxic_necrot_fac-like_cat"/>
</dbReference>
<dbReference type="NCBIfam" id="NF010013">
    <property type="entry name" value="PRK13487.1"/>
    <property type="match status" value="1"/>
</dbReference>
<dbReference type="NCBIfam" id="NF010014">
    <property type="entry name" value="PRK13489.1"/>
    <property type="match status" value="1"/>
</dbReference>
<dbReference type="PANTHER" id="PTHR35147">
    <property type="entry name" value="CHEMORECEPTOR GLUTAMINE DEAMIDASE CHED-RELATED"/>
    <property type="match status" value="1"/>
</dbReference>
<dbReference type="PANTHER" id="PTHR35147:SF2">
    <property type="entry name" value="CHEMORECEPTOR GLUTAMINE DEAMIDASE CHED-RELATED"/>
    <property type="match status" value="1"/>
</dbReference>
<dbReference type="Pfam" id="PF03975">
    <property type="entry name" value="CheD"/>
    <property type="match status" value="1"/>
</dbReference>
<dbReference type="SUPFAM" id="SSF64438">
    <property type="entry name" value="CNF1/YfiH-like putative cysteine hydrolases"/>
    <property type="match status" value="1"/>
</dbReference>
<sequence length="234" mass="25712">MSGLPIATNLYFDAHFHRHGVKLLPNEFYTTREDMVLVTVLGSCVAACLHDPIGRIGGMNHFMLPDDGADPSAAASESMRYGAYAMEVLINELIKAGGRRERFEAKVFGGAAVLAGMTTINIGDRNADFVRRYLALERIRITAEDLQGVHPRKVAFMPHTGQAMVKKLRVQAPDVAAREAALAREAVDPHGERAPRVRPRVELFGTPAPKAQAKPRIELFGMRAMQPATRKQEA</sequence>
<proteinExistence type="inferred from homology"/>
<feature type="chain" id="PRO_0000251014" description="Probable chemoreceptor glutamine deamidase CheD">
    <location>
        <begin position="1"/>
        <end position="234"/>
    </location>
</feature>
<accession>Q63PS1</accession>
<gene>
    <name evidence="1" type="primary">cheD</name>
    <name type="ordered locus">BPSL3302</name>
</gene>
<evidence type="ECO:0000255" key="1">
    <source>
        <dbReference type="HAMAP-Rule" id="MF_01440"/>
    </source>
</evidence>
<comment type="function">
    <text evidence="1">Probably deamidates glutamine residues to glutamate on methyl-accepting chemotaxis receptors (MCPs), playing an important role in chemotaxis.</text>
</comment>
<comment type="catalytic activity">
    <reaction evidence="1">
        <text>L-glutaminyl-[protein] + H2O = L-glutamyl-[protein] + NH4(+)</text>
        <dbReference type="Rhea" id="RHEA:16441"/>
        <dbReference type="Rhea" id="RHEA-COMP:10207"/>
        <dbReference type="Rhea" id="RHEA-COMP:10208"/>
        <dbReference type="ChEBI" id="CHEBI:15377"/>
        <dbReference type="ChEBI" id="CHEBI:28938"/>
        <dbReference type="ChEBI" id="CHEBI:29973"/>
        <dbReference type="ChEBI" id="CHEBI:30011"/>
        <dbReference type="EC" id="3.5.1.44"/>
    </reaction>
</comment>
<comment type="similarity">
    <text evidence="1">Belongs to the CheD family.</text>
</comment>
<name>CHED_BURPS</name>
<reference key="1">
    <citation type="journal article" date="2004" name="Proc. Natl. Acad. Sci. U.S.A.">
        <title>Genomic plasticity of the causative agent of melioidosis, Burkholderia pseudomallei.</title>
        <authorList>
            <person name="Holden M.T.G."/>
            <person name="Titball R.W."/>
            <person name="Peacock S.J."/>
            <person name="Cerdeno-Tarraga A.-M."/>
            <person name="Atkins T."/>
            <person name="Crossman L.C."/>
            <person name="Pitt T."/>
            <person name="Churcher C."/>
            <person name="Mungall K.L."/>
            <person name="Bentley S.D."/>
            <person name="Sebaihia M."/>
            <person name="Thomson N.R."/>
            <person name="Bason N."/>
            <person name="Beacham I.R."/>
            <person name="Brooks K."/>
            <person name="Brown K.A."/>
            <person name="Brown N.F."/>
            <person name="Challis G.L."/>
            <person name="Cherevach I."/>
            <person name="Chillingworth T."/>
            <person name="Cronin A."/>
            <person name="Crossett B."/>
            <person name="Davis P."/>
            <person name="DeShazer D."/>
            <person name="Feltwell T."/>
            <person name="Fraser A."/>
            <person name="Hance Z."/>
            <person name="Hauser H."/>
            <person name="Holroyd S."/>
            <person name="Jagels K."/>
            <person name="Keith K.E."/>
            <person name="Maddison M."/>
            <person name="Moule S."/>
            <person name="Price C."/>
            <person name="Quail M.A."/>
            <person name="Rabbinowitsch E."/>
            <person name="Rutherford K."/>
            <person name="Sanders M."/>
            <person name="Simmonds M."/>
            <person name="Songsivilai S."/>
            <person name="Stevens K."/>
            <person name="Tumapa S."/>
            <person name="Vesaratchavest M."/>
            <person name="Whitehead S."/>
            <person name="Yeats C."/>
            <person name="Barrell B.G."/>
            <person name="Oyston P.C.F."/>
            <person name="Parkhill J."/>
        </authorList>
    </citation>
    <scope>NUCLEOTIDE SEQUENCE [LARGE SCALE GENOMIC DNA]</scope>
    <source>
        <strain>K96243</strain>
    </source>
</reference>